<sequence>MKTPRLPIAIQQAVMRRLRENLAQANLKLDRHYPEPKLVYTQRGTSAGTAWLESYEIRLNPVLLLENIDTFIAEVVPHELAHLLVWKHFGRKAPHGKEWKWMMESVLGVPARRTHQFALQSVRRNTFPYHCQCQQHQLTVRRHNRVVRGEAVYRCVHCGEPLVAG</sequence>
<comment type="cofactor">
    <cofactor evidence="1">
        <name>Zn(2+)</name>
        <dbReference type="ChEBI" id="CHEBI:29105"/>
    </cofactor>
    <text evidence="1">Binds 1 zinc ion.</text>
</comment>
<comment type="subcellular location">
    <subcellularLocation>
        <location evidence="1">Cytoplasm</location>
    </subcellularLocation>
</comment>
<comment type="similarity">
    <text evidence="1">Belongs to the SprT family.</text>
</comment>
<feature type="chain" id="PRO_1000133253" description="Protein SprT">
    <location>
        <begin position="1"/>
        <end position="165"/>
    </location>
</feature>
<feature type="domain" description="SprT-like" evidence="1">
    <location>
        <begin position="22"/>
        <end position="163"/>
    </location>
</feature>
<feature type="active site" evidence="1">
    <location>
        <position position="79"/>
    </location>
</feature>
<feature type="binding site" evidence="1">
    <location>
        <position position="78"/>
    </location>
    <ligand>
        <name>Zn(2+)</name>
        <dbReference type="ChEBI" id="CHEBI:29105"/>
    </ligand>
</feature>
<feature type="binding site" evidence="1">
    <location>
        <position position="82"/>
    </location>
    <ligand>
        <name>Zn(2+)</name>
        <dbReference type="ChEBI" id="CHEBI:29105"/>
    </ligand>
</feature>
<keyword id="KW-0963">Cytoplasm</keyword>
<keyword id="KW-0479">Metal-binding</keyword>
<keyword id="KW-0862">Zinc</keyword>
<gene>
    <name evidence="1" type="primary">sprT</name>
    <name type="ordered locus">SNSL254_A3339</name>
</gene>
<dbReference type="EMBL" id="CP001113">
    <property type="protein sequence ID" value="ACF65191.1"/>
    <property type="molecule type" value="Genomic_DNA"/>
</dbReference>
<dbReference type="RefSeq" id="WP_000856775.1">
    <property type="nucleotide sequence ID" value="NZ_CCMR01000001.1"/>
</dbReference>
<dbReference type="KEGG" id="see:SNSL254_A3339"/>
<dbReference type="HOGENOM" id="CLU_113336_0_1_6"/>
<dbReference type="Proteomes" id="UP000008824">
    <property type="component" value="Chromosome"/>
</dbReference>
<dbReference type="GO" id="GO:0005737">
    <property type="term" value="C:cytoplasm"/>
    <property type="evidence" value="ECO:0007669"/>
    <property type="project" value="UniProtKB-SubCell"/>
</dbReference>
<dbReference type="GO" id="GO:0008270">
    <property type="term" value="F:zinc ion binding"/>
    <property type="evidence" value="ECO:0007669"/>
    <property type="project" value="UniProtKB-UniRule"/>
</dbReference>
<dbReference type="GO" id="GO:0006950">
    <property type="term" value="P:response to stress"/>
    <property type="evidence" value="ECO:0007669"/>
    <property type="project" value="UniProtKB-ARBA"/>
</dbReference>
<dbReference type="HAMAP" id="MF_00746">
    <property type="entry name" value="SprT"/>
    <property type="match status" value="1"/>
</dbReference>
<dbReference type="InterPro" id="IPR006640">
    <property type="entry name" value="SprT-like_domain"/>
</dbReference>
<dbReference type="InterPro" id="IPR035240">
    <property type="entry name" value="SprT_Zn_ribbon"/>
</dbReference>
<dbReference type="InterPro" id="IPR023483">
    <property type="entry name" value="Uncharacterised_SprT"/>
</dbReference>
<dbReference type="NCBIfam" id="NF003421">
    <property type="entry name" value="PRK04860.1"/>
    <property type="match status" value="1"/>
</dbReference>
<dbReference type="PANTHER" id="PTHR38773">
    <property type="entry name" value="PROTEIN SPRT"/>
    <property type="match status" value="1"/>
</dbReference>
<dbReference type="PANTHER" id="PTHR38773:SF1">
    <property type="entry name" value="PROTEIN SPRT"/>
    <property type="match status" value="1"/>
</dbReference>
<dbReference type="Pfam" id="PF10263">
    <property type="entry name" value="SprT-like"/>
    <property type="match status" value="1"/>
</dbReference>
<dbReference type="Pfam" id="PF17283">
    <property type="entry name" value="Zn_ribbon_SprT"/>
    <property type="match status" value="1"/>
</dbReference>
<dbReference type="SMART" id="SM00731">
    <property type="entry name" value="SprT"/>
    <property type="match status" value="1"/>
</dbReference>
<dbReference type="PROSITE" id="PS00142">
    <property type="entry name" value="ZINC_PROTEASE"/>
    <property type="match status" value="1"/>
</dbReference>
<evidence type="ECO:0000255" key="1">
    <source>
        <dbReference type="HAMAP-Rule" id="MF_00746"/>
    </source>
</evidence>
<protein>
    <recommendedName>
        <fullName evidence="1">Protein SprT</fullName>
    </recommendedName>
</protein>
<proteinExistence type="inferred from homology"/>
<organism>
    <name type="scientific">Salmonella newport (strain SL254)</name>
    <dbReference type="NCBI Taxonomy" id="423368"/>
    <lineage>
        <taxon>Bacteria</taxon>
        <taxon>Pseudomonadati</taxon>
        <taxon>Pseudomonadota</taxon>
        <taxon>Gammaproteobacteria</taxon>
        <taxon>Enterobacterales</taxon>
        <taxon>Enterobacteriaceae</taxon>
        <taxon>Salmonella</taxon>
    </lineage>
</organism>
<accession>B4T5J9</accession>
<reference key="1">
    <citation type="journal article" date="2011" name="J. Bacteriol.">
        <title>Comparative genomics of 28 Salmonella enterica isolates: evidence for CRISPR-mediated adaptive sublineage evolution.</title>
        <authorList>
            <person name="Fricke W.F."/>
            <person name="Mammel M.K."/>
            <person name="McDermott P.F."/>
            <person name="Tartera C."/>
            <person name="White D.G."/>
            <person name="Leclerc J.E."/>
            <person name="Ravel J."/>
            <person name="Cebula T.A."/>
        </authorList>
    </citation>
    <scope>NUCLEOTIDE SEQUENCE [LARGE SCALE GENOMIC DNA]</scope>
    <source>
        <strain>SL254</strain>
    </source>
</reference>
<name>SPRT_SALNS</name>